<keyword id="KW-0963">Cytoplasm</keyword>
<keyword id="KW-0804">Transcription</keyword>
<keyword id="KW-0805">Transcription regulation</keyword>
<proteinExistence type="inferred from homology"/>
<dbReference type="EMBL" id="CP000901">
    <property type="protein sequence ID" value="ABX86078.1"/>
    <property type="molecule type" value="Genomic_DNA"/>
</dbReference>
<dbReference type="RefSeq" id="WP_002210683.1">
    <property type="nucleotide sequence ID" value="NZ_CP009935.1"/>
</dbReference>
<dbReference type="SMR" id="A9R8D2"/>
<dbReference type="GeneID" id="57974980"/>
<dbReference type="KEGG" id="ypg:YpAngola_A0456"/>
<dbReference type="PATRIC" id="fig|349746.12.peg.1412"/>
<dbReference type="GO" id="GO:0005737">
    <property type="term" value="C:cytoplasm"/>
    <property type="evidence" value="ECO:0007669"/>
    <property type="project" value="UniProtKB-SubCell"/>
</dbReference>
<dbReference type="GO" id="GO:0006355">
    <property type="term" value="P:regulation of DNA-templated transcription"/>
    <property type="evidence" value="ECO:0007669"/>
    <property type="project" value="InterPro"/>
</dbReference>
<dbReference type="Gene3D" id="1.20.120.1370">
    <property type="entry name" value="Regulator of RNA polymerase sigma(70) subunit, domain 4"/>
    <property type="match status" value="1"/>
</dbReference>
<dbReference type="HAMAP" id="MF_01181">
    <property type="entry name" value="Rsd"/>
    <property type="match status" value="1"/>
</dbReference>
<dbReference type="InterPro" id="IPR038309">
    <property type="entry name" value="Rsd/AlgQ_sf"/>
</dbReference>
<dbReference type="InterPro" id="IPR023785">
    <property type="entry name" value="Sigma70_reg_Rsd"/>
</dbReference>
<dbReference type="InterPro" id="IPR007448">
    <property type="entry name" value="Sigma70_reg_Rsd_AlgQ"/>
</dbReference>
<dbReference type="NCBIfam" id="NF008723">
    <property type="entry name" value="PRK11718.1"/>
    <property type="match status" value="1"/>
</dbReference>
<dbReference type="Pfam" id="PF04353">
    <property type="entry name" value="Rsd_AlgQ"/>
    <property type="match status" value="1"/>
</dbReference>
<dbReference type="PIRSF" id="PIRSF016548">
    <property type="entry name" value="Rsd_AlgQ"/>
    <property type="match status" value="1"/>
</dbReference>
<sequence>MLNRLESLTQRVGGSNELIDQWLHARKELLVSYCTVIGIKPQKEKHTPLNAKTLENFCHNLVDYLSSGHFHLYDRIIKEVEGASSPKMALTAKIHPALKNNTQTIMAFHDCYTNIEIDDDSCTEYQQALSDIGEALDARFRLEDQLIQWAAESWQAAQLADADKKSQVN</sequence>
<gene>
    <name evidence="1" type="primary">rsd</name>
    <name type="ordered locus">YpAngola_A0456</name>
</gene>
<protein>
    <recommendedName>
        <fullName evidence="1">Regulator of sigma D</fullName>
    </recommendedName>
</protein>
<accession>A9R8D2</accession>
<feature type="chain" id="PRO_1000138207" description="Regulator of sigma D">
    <location>
        <begin position="1"/>
        <end position="169"/>
    </location>
</feature>
<evidence type="ECO:0000255" key="1">
    <source>
        <dbReference type="HAMAP-Rule" id="MF_01181"/>
    </source>
</evidence>
<comment type="function">
    <text evidence="1">Binds RpoD and negatively regulates RpoD-mediated transcription activation by preventing the interaction between the primary sigma factor RpoD with the catalytic core of the RNA polymerase and with promoter DNA. May be involved in replacement of the RNA polymerase sigma subunit from RpoD to RpoS during the transition from exponential growth to the stationary phase.</text>
</comment>
<comment type="subunit">
    <text evidence="1">Interacts with RpoD.</text>
</comment>
<comment type="subcellular location">
    <subcellularLocation>
        <location evidence="1">Cytoplasm</location>
    </subcellularLocation>
</comment>
<comment type="similarity">
    <text evidence="1">Belongs to the Rsd/AlgQ family.</text>
</comment>
<organism>
    <name type="scientific">Yersinia pestis bv. Antiqua (strain Angola)</name>
    <dbReference type="NCBI Taxonomy" id="349746"/>
    <lineage>
        <taxon>Bacteria</taxon>
        <taxon>Pseudomonadati</taxon>
        <taxon>Pseudomonadota</taxon>
        <taxon>Gammaproteobacteria</taxon>
        <taxon>Enterobacterales</taxon>
        <taxon>Yersiniaceae</taxon>
        <taxon>Yersinia</taxon>
    </lineage>
</organism>
<name>RSD_YERPG</name>
<reference key="1">
    <citation type="journal article" date="2010" name="J. Bacteriol.">
        <title>Genome sequence of the deep-rooted Yersinia pestis strain Angola reveals new insights into the evolution and pangenome of the plague bacterium.</title>
        <authorList>
            <person name="Eppinger M."/>
            <person name="Worsham P.L."/>
            <person name="Nikolich M.P."/>
            <person name="Riley D.R."/>
            <person name="Sebastian Y."/>
            <person name="Mou S."/>
            <person name="Achtman M."/>
            <person name="Lindler L.E."/>
            <person name="Ravel J."/>
        </authorList>
    </citation>
    <scope>NUCLEOTIDE SEQUENCE [LARGE SCALE GENOMIC DNA]</scope>
    <source>
        <strain>Angola</strain>
    </source>
</reference>